<accession>B7MK84</accession>
<protein>
    <recommendedName>
        <fullName evidence="1">Fatty acid metabolism regulator protein</fullName>
    </recommendedName>
</protein>
<dbReference type="EMBL" id="CU928161">
    <property type="protein sequence ID" value="CAR02576.1"/>
    <property type="molecule type" value="Genomic_DNA"/>
</dbReference>
<dbReference type="RefSeq" id="WP_000234823.1">
    <property type="nucleotide sequence ID" value="NC_011742.1"/>
</dbReference>
<dbReference type="SMR" id="B7MK84"/>
<dbReference type="GeneID" id="93776245"/>
<dbReference type="KEGG" id="ecz:ECS88_1250"/>
<dbReference type="HOGENOM" id="CLU_017584_9_4_6"/>
<dbReference type="Proteomes" id="UP000000747">
    <property type="component" value="Chromosome"/>
</dbReference>
<dbReference type="GO" id="GO:0005737">
    <property type="term" value="C:cytoplasm"/>
    <property type="evidence" value="ECO:0007669"/>
    <property type="project" value="UniProtKB-SubCell"/>
</dbReference>
<dbReference type="GO" id="GO:0003677">
    <property type="term" value="F:DNA binding"/>
    <property type="evidence" value="ECO:0007669"/>
    <property type="project" value="UniProtKB-KW"/>
</dbReference>
<dbReference type="GO" id="GO:0003700">
    <property type="term" value="F:DNA-binding transcription factor activity"/>
    <property type="evidence" value="ECO:0007669"/>
    <property type="project" value="UniProtKB-UniRule"/>
</dbReference>
<dbReference type="GO" id="GO:0000062">
    <property type="term" value="F:fatty-acyl-CoA binding"/>
    <property type="evidence" value="ECO:0007669"/>
    <property type="project" value="InterPro"/>
</dbReference>
<dbReference type="GO" id="GO:0006631">
    <property type="term" value="P:fatty acid metabolic process"/>
    <property type="evidence" value="ECO:0007669"/>
    <property type="project" value="UniProtKB-KW"/>
</dbReference>
<dbReference type="GO" id="GO:0019217">
    <property type="term" value="P:regulation of fatty acid metabolic process"/>
    <property type="evidence" value="ECO:0007669"/>
    <property type="project" value="UniProtKB-UniRule"/>
</dbReference>
<dbReference type="CDD" id="cd07377">
    <property type="entry name" value="WHTH_GntR"/>
    <property type="match status" value="1"/>
</dbReference>
<dbReference type="FunFam" id="1.10.10.10:FF:000036">
    <property type="entry name" value="Fatty acid metabolism regulator protein"/>
    <property type="match status" value="1"/>
</dbReference>
<dbReference type="FunFam" id="1.20.120.530:FF:000003">
    <property type="entry name" value="Fatty acid metabolism regulator protein"/>
    <property type="match status" value="1"/>
</dbReference>
<dbReference type="Gene3D" id="1.20.120.530">
    <property type="entry name" value="GntR ligand-binding domain-like"/>
    <property type="match status" value="1"/>
</dbReference>
<dbReference type="Gene3D" id="1.10.10.10">
    <property type="entry name" value="Winged helix-like DNA-binding domain superfamily/Winged helix DNA-binding domain"/>
    <property type="match status" value="1"/>
</dbReference>
<dbReference type="HAMAP" id="MF_00696">
    <property type="entry name" value="HTH_FadR"/>
    <property type="match status" value="1"/>
</dbReference>
<dbReference type="InterPro" id="IPR014178">
    <property type="entry name" value="FA-response_TF_FadR"/>
</dbReference>
<dbReference type="InterPro" id="IPR028374">
    <property type="entry name" value="FadR_C"/>
</dbReference>
<dbReference type="InterPro" id="IPR008920">
    <property type="entry name" value="TF_FadR/GntR_C"/>
</dbReference>
<dbReference type="InterPro" id="IPR000524">
    <property type="entry name" value="Tscrpt_reg_HTH_GntR"/>
</dbReference>
<dbReference type="InterPro" id="IPR036388">
    <property type="entry name" value="WH-like_DNA-bd_sf"/>
</dbReference>
<dbReference type="InterPro" id="IPR036390">
    <property type="entry name" value="WH_DNA-bd_sf"/>
</dbReference>
<dbReference type="NCBIfam" id="TIGR02812">
    <property type="entry name" value="fadR_gamma"/>
    <property type="match status" value="1"/>
</dbReference>
<dbReference type="NCBIfam" id="NF003444">
    <property type="entry name" value="PRK04984.1"/>
    <property type="match status" value="1"/>
</dbReference>
<dbReference type="PANTHER" id="PTHR43537:SF52">
    <property type="entry name" value="FATTY ACID METABOLISM REGULATOR PROTEIN"/>
    <property type="match status" value="1"/>
</dbReference>
<dbReference type="PANTHER" id="PTHR43537">
    <property type="entry name" value="TRANSCRIPTIONAL REGULATOR, GNTR FAMILY"/>
    <property type="match status" value="1"/>
</dbReference>
<dbReference type="Pfam" id="PF07840">
    <property type="entry name" value="FadR_C"/>
    <property type="match status" value="1"/>
</dbReference>
<dbReference type="Pfam" id="PF00392">
    <property type="entry name" value="GntR"/>
    <property type="match status" value="1"/>
</dbReference>
<dbReference type="PRINTS" id="PR00035">
    <property type="entry name" value="HTHGNTR"/>
</dbReference>
<dbReference type="SMART" id="SM00345">
    <property type="entry name" value="HTH_GNTR"/>
    <property type="match status" value="1"/>
</dbReference>
<dbReference type="SUPFAM" id="SSF48008">
    <property type="entry name" value="GntR ligand-binding domain-like"/>
    <property type="match status" value="1"/>
</dbReference>
<dbReference type="SUPFAM" id="SSF46785">
    <property type="entry name" value="Winged helix' DNA-binding domain"/>
    <property type="match status" value="1"/>
</dbReference>
<dbReference type="PROSITE" id="PS50949">
    <property type="entry name" value="HTH_GNTR"/>
    <property type="match status" value="1"/>
</dbReference>
<organism>
    <name type="scientific">Escherichia coli O45:K1 (strain S88 / ExPEC)</name>
    <dbReference type="NCBI Taxonomy" id="585035"/>
    <lineage>
        <taxon>Bacteria</taxon>
        <taxon>Pseudomonadati</taxon>
        <taxon>Pseudomonadota</taxon>
        <taxon>Gammaproteobacteria</taxon>
        <taxon>Enterobacterales</taxon>
        <taxon>Enterobacteriaceae</taxon>
        <taxon>Escherichia</taxon>
    </lineage>
</organism>
<evidence type="ECO:0000255" key="1">
    <source>
        <dbReference type="HAMAP-Rule" id="MF_00696"/>
    </source>
</evidence>
<reference key="1">
    <citation type="journal article" date="2009" name="PLoS Genet.">
        <title>Organised genome dynamics in the Escherichia coli species results in highly diverse adaptive paths.</title>
        <authorList>
            <person name="Touchon M."/>
            <person name="Hoede C."/>
            <person name="Tenaillon O."/>
            <person name="Barbe V."/>
            <person name="Baeriswyl S."/>
            <person name="Bidet P."/>
            <person name="Bingen E."/>
            <person name="Bonacorsi S."/>
            <person name="Bouchier C."/>
            <person name="Bouvet O."/>
            <person name="Calteau A."/>
            <person name="Chiapello H."/>
            <person name="Clermont O."/>
            <person name="Cruveiller S."/>
            <person name="Danchin A."/>
            <person name="Diard M."/>
            <person name="Dossat C."/>
            <person name="Karoui M.E."/>
            <person name="Frapy E."/>
            <person name="Garry L."/>
            <person name="Ghigo J.M."/>
            <person name="Gilles A.M."/>
            <person name="Johnson J."/>
            <person name="Le Bouguenec C."/>
            <person name="Lescat M."/>
            <person name="Mangenot S."/>
            <person name="Martinez-Jehanne V."/>
            <person name="Matic I."/>
            <person name="Nassif X."/>
            <person name="Oztas S."/>
            <person name="Petit M.A."/>
            <person name="Pichon C."/>
            <person name="Rouy Z."/>
            <person name="Ruf C.S."/>
            <person name="Schneider D."/>
            <person name="Tourret J."/>
            <person name="Vacherie B."/>
            <person name="Vallenet D."/>
            <person name="Medigue C."/>
            <person name="Rocha E.P.C."/>
            <person name="Denamur E."/>
        </authorList>
    </citation>
    <scope>NUCLEOTIDE SEQUENCE [LARGE SCALE GENOMIC DNA]</scope>
    <source>
        <strain>S88 / ExPEC</strain>
    </source>
</reference>
<proteinExistence type="inferred from homology"/>
<name>FADR_ECO45</name>
<sequence>MVIKAQSPAGFAEEYIIESIWNNRFPPGTILPAERELSELIGVTRTTLREVLQRLARDGWLTIQHGKPTKVNNFWETSGLNILETLARLDHESVPQLIDNLLSVRTNISTIFIRTAFRQHPDKAQEVLATANEVADHADAFAELDYNIFRGLAFASGNPIYGLILNGMKGLYTRIGRHYFANPEARSLALGFYHKLSALCSEGAHDQVYETVRRYGHESGEIWHRMQKNLPGDLAIQGR</sequence>
<keyword id="KW-0010">Activator</keyword>
<keyword id="KW-0963">Cytoplasm</keyword>
<keyword id="KW-0238">DNA-binding</keyword>
<keyword id="KW-0276">Fatty acid metabolism</keyword>
<keyword id="KW-0443">Lipid metabolism</keyword>
<keyword id="KW-1185">Reference proteome</keyword>
<keyword id="KW-0678">Repressor</keyword>
<keyword id="KW-0804">Transcription</keyword>
<keyword id="KW-0805">Transcription regulation</keyword>
<gene>
    <name evidence="1" type="primary">fadR</name>
    <name type="ordered locus">ECS88_1250</name>
</gene>
<feature type="chain" id="PRO_1000132312" description="Fatty acid metabolism regulator protein">
    <location>
        <begin position="1"/>
        <end position="239"/>
    </location>
</feature>
<feature type="domain" description="HTH gntR-type" evidence="1">
    <location>
        <begin position="6"/>
        <end position="74"/>
    </location>
</feature>
<feature type="DNA-binding region" description="H-T-H motif" evidence="1">
    <location>
        <begin position="34"/>
        <end position="53"/>
    </location>
</feature>
<comment type="function">
    <text evidence="1">Multifunctional regulator of fatty acid metabolism.</text>
</comment>
<comment type="subunit">
    <text evidence="1">Homodimer.</text>
</comment>
<comment type="subcellular location">
    <subcellularLocation>
        <location evidence="1">Cytoplasm</location>
    </subcellularLocation>
</comment>